<comment type="function">
    <text>Potential calcium-dependent cell-adhesion protein.</text>
</comment>
<comment type="subcellular location">
    <subcellularLocation>
        <location evidence="1">Cell membrane</location>
        <topology evidence="1">Single-pass type I membrane protein</topology>
    </subcellularLocation>
</comment>
<comment type="sequence caution" evidence="5">
    <conflict type="erroneous initiation">
        <sequence resource="EMBL-CDS" id="AAH27907"/>
    </conflict>
    <text>Truncated N-terminus.</text>
</comment>
<gene>
    <name type="primary">PCDH20</name>
    <name type="synonym">PCDH13</name>
</gene>
<name>PCD20_HUMAN</name>
<proteinExistence type="evidence at protein level"/>
<dbReference type="EMBL" id="AF169693">
    <property type="protein sequence ID" value="AAF89690.1"/>
    <property type="molecule type" value="mRNA"/>
</dbReference>
<dbReference type="EMBL" id="AK289924">
    <property type="protein sequence ID" value="BAF82613.1"/>
    <property type="molecule type" value="mRNA"/>
</dbReference>
<dbReference type="EMBL" id="AL833830">
    <property type="protein sequence ID" value="CAD38690.1"/>
    <property type="molecule type" value="mRNA"/>
</dbReference>
<dbReference type="EMBL" id="AL592490">
    <property type="status" value="NOT_ANNOTATED_CDS"/>
    <property type="molecule type" value="Genomic_DNA"/>
</dbReference>
<dbReference type="EMBL" id="CH471124">
    <property type="protein sequence ID" value="EAW52085.1"/>
    <property type="molecule type" value="Genomic_DNA"/>
</dbReference>
<dbReference type="EMBL" id="BC027907">
    <property type="protein sequence ID" value="AAH27907.1"/>
    <property type="status" value="ALT_INIT"/>
    <property type="molecule type" value="mRNA"/>
</dbReference>
<dbReference type="CCDS" id="CCDS9442.2"/>
<dbReference type="RefSeq" id="NP_073754.2">
    <property type="nucleotide sequence ID" value="NM_022843.4"/>
</dbReference>
<dbReference type="RefSeq" id="XP_016876197.1">
    <property type="nucleotide sequence ID" value="XM_017020708.1"/>
</dbReference>
<dbReference type="RefSeq" id="XP_054230840.1">
    <property type="nucleotide sequence ID" value="XM_054374865.1"/>
</dbReference>
<dbReference type="SMR" id="Q8N6Y1"/>
<dbReference type="BioGRID" id="122337">
    <property type="interactions" value="73"/>
</dbReference>
<dbReference type="FunCoup" id="Q8N6Y1">
    <property type="interactions" value="291"/>
</dbReference>
<dbReference type="IntAct" id="Q8N6Y1">
    <property type="interactions" value="65"/>
</dbReference>
<dbReference type="STRING" id="9606.ENSP00000386653"/>
<dbReference type="GlyCosmos" id="Q8N6Y1">
    <property type="glycosylation" value="8 sites, No reported glycans"/>
</dbReference>
<dbReference type="GlyGen" id="Q8N6Y1">
    <property type="glycosylation" value="8 sites, 2 N-linked glycans (2 sites)"/>
</dbReference>
<dbReference type="iPTMnet" id="Q8N6Y1"/>
<dbReference type="PhosphoSitePlus" id="Q8N6Y1"/>
<dbReference type="BioMuta" id="PCDH20"/>
<dbReference type="DMDM" id="544584765"/>
<dbReference type="jPOST" id="Q8N6Y1"/>
<dbReference type="MassIVE" id="Q8N6Y1"/>
<dbReference type="PaxDb" id="9606-ENSP00000386653"/>
<dbReference type="PeptideAtlas" id="Q8N6Y1"/>
<dbReference type="ProteomicsDB" id="72248"/>
<dbReference type="Antibodypedia" id="76720">
    <property type="antibodies" value="159 antibodies from 19 providers"/>
</dbReference>
<dbReference type="DNASU" id="64881"/>
<dbReference type="Ensembl" id="ENST00000409204.5">
    <property type="protein sequence ID" value="ENSP00000387250.3"/>
    <property type="gene ID" value="ENSG00000280165.2"/>
</dbReference>
<dbReference type="GeneID" id="64881"/>
<dbReference type="KEGG" id="hsa:64881"/>
<dbReference type="MANE-Select" id="ENST00000409204.5">
    <property type="protein sequence ID" value="ENSP00000387250.3"/>
    <property type="RefSeq nucleotide sequence ID" value="NM_022843.4"/>
    <property type="RefSeq protein sequence ID" value="NP_073754.2"/>
</dbReference>
<dbReference type="UCSC" id="uc001vid.5">
    <property type="organism name" value="human"/>
</dbReference>
<dbReference type="AGR" id="HGNC:14257"/>
<dbReference type="CTD" id="64881"/>
<dbReference type="DisGeNET" id="64881"/>
<dbReference type="GeneCards" id="PCDH20"/>
<dbReference type="HGNC" id="HGNC:14257">
    <property type="gene designation" value="PCDH20"/>
</dbReference>
<dbReference type="HPA" id="ENSG00000280165">
    <property type="expression patterns" value="Tissue enhanced (brain, smooth muscle)"/>
</dbReference>
<dbReference type="MIM" id="614449">
    <property type="type" value="gene"/>
</dbReference>
<dbReference type="neXtProt" id="NX_Q8N6Y1"/>
<dbReference type="OpenTargets" id="ENSG00000197991"/>
<dbReference type="OpenTargets" id="ENSG00000280165"/>
<dbReference type="PharmGKB" id="PA33004"/>
<dbReference type="VEuPathDB" id="HostDB:ENSG00000280165"/>
<dbReference type="eggNOG" id="ENOG502QU9U">
    <property type="taxonomic scope" value="Eukaryota"/>
</dbReference>
<dbReference type="GeneTree" id="ENSGT00940000156743"/>
<dbReference type="HOGENOM" id="CLU_006480_5_2_1"/>
<dbReference type="InParanoid" id="Q8N6Y1"/>
<dbReference type="OMA" id="IEHPAMD"/>
<dbReference type="OrthoDB" id="6252479at2759"/>
<dbReference type="PAN-GO" id="Q8N6Y1">
    <property type="GO annotations" value="2 GO annotations based on evolutionary models"/>
</dbReference>
<dbReference type="PhylomeDB" id="Q8N6Y1"/>
<dbReference type="TreeFam" id="TF320624"/>
<dbReference type="PathwayCommons" id="Q8N6Y1"/>
<dbReference type="SignaLink" id="Q8N6Y1"/>
<dbReference type="BioGRID-ORCS" id="64881">
    <property type="hits" value="9 hits in 1138 CRISPR screens"/>
</dbReference>
<dbReference type="GeneWiki" id="PCDH20"/>
<dbReference type="GenomeRNAi" id="64881"/>
<dbReference type="Pharos" id="Q8N6Y1">
    <property type="development level" value="Tbio"/>
</dbReference>
<dbReference type="PRO" id="PR:Q8N6Y1"/>
<dbReference type="Proteomes" id="UP000005640">
    <property type="component" value="Chromosome 13"/>
</dbReference>
<dbReference type="RNAct" id="Q8N6Y1">
    <property type="molecule type" value="protein"/>
</dbReference>
<dbReference type="Bgee" id="ENSG00000280165">
    <property type="expression patterns" value="Expressed in superior frontal gyrus and 91 other cell types or tissues"/>
</dbReference>
<dbReference type="GO" id="GO:0005886">
    <property type="term" value="C:plasma membrane"/>
    <property type="evidence" value="ECO:0000318"/>
    <property type="project" value="GO_Central"/>
</dbReference>
<dbReference type="GO" id="GO:0005509">
    <property type="term" value="F:calcium ion binding"/>
    <property type="evidence" value="ECO:0007669"/>
    <property type="project" value="InterPro"/>
</dbReference>
<dbReference type="GO" id="GO:0003723">
    <property type="term" value="F:RNA binding"/>
    <property type="evidence" value="ECO:0007005"/>
    <property type="project" value="UniProtKB"/>
</dbReference>
<dbReference type="GO" id="GO:0007155">
    <property type="term" value="P:cell adhesion"/>
    <property type="evidence" value="ECO:0000318"/>
    <property type="project" value="GO_Central"/>
</dbReference>
<dbReference type="GO" id="GO:0007156">
    <property type="term" value="P:homophilic cell adhesion via plasma membrane adhesion molecules"/>
    <property type="evidence" value="ECO:0007669"/>
    <property type="project" value="InterPro"/>
</dbReference>
<dbReference type="CDD" id="cd11304">
    <property type="entry name" value="Cadherin_repeat"/>
    <property type="match status" value="6"/>
</dbReference>
<dbReference type="FunFam" id="2.60.40.60:FF:000005">
    <property type="entry name" value="Protocadherin 9"/>
    <property type="match status" value="1"/>
</dbReference>
<dbReference type="FunFam" id="2.60.40.60:FF:000016">
    <property type="entry name" value="Protocadherin 9"/>
    <property type="match status" value="1"/>
</dbReference>
<dbReference type="FunFam" id="2.60.40.60:FF:000002">
    <property type="entry name" value="Protocadherin alpha 2"/>
    <property type="match status" value="1"/>
</dbReference>
<dbReference type="FunFam" id="2.60.40.60:FF:000007">
    <property type="entry name" value="Protocadherin alpha 2"/>
    <property type="match status" value="1"/>
</dbReference>
<dbReference type="FunFam" id="2.60.40.60:FF:000162">
    <property type="entry name" value="Protocadherin-20"/>
    <property type="match status" value="1"/>
</dbReference>
<dbReference type="FunFam" id="2.60.40.60:FF:000218">
    <property type="entry name" value="Protocadherin-20"/>
    <property type="match status" value="1"/>
</dbReference>
<dbReference type="FunFam" id="2.60.40.60:FF:000145">
    <property type="entry name" value="protocadherin-20"/>
    <property type="match status" value="1"/>
</dbReference>
<dbReference type="Gene3D" id="2.60.40.60">
    <property type="entry name" value="Cadherins"/>
    <property type="match status" value="7"/>
</dbReference>
<dbReference type="InterPro" id="IPR002126">
    <property type="entry name" value="Cadherin-like_dom"/>
</dbReference>
<dbReference type="InterPro" id="IPR015919">
    <property type="entry name" value="Cadherin-like_sf"/>
</dbReference>
<dbReference type="InterPro" id="IPR020894">
    <property type="entry name" value="Cadherin_CS"/>
</dbReference>
<dbReference type="InterPro" id="IPR050174">
    <property type="entry name" value="Protocadherin/Cadherin-CA"/>
</dbReference>
<dbReference type="PANTHER" id="PTHR24028">
    <property type="entry name" value="CADHERIN-87A"/>
    <property type="match status" value="1"/>
</dbReference>
<dbReference type="PANTHER" id="PTHR24028:SF260">
    <property type="entry name" value="PROTOCADHERIN-20"/>
    <property type="match status" value="1"/>
</dbReference>
<dbReference type="Pfam" id="PF00028">
    <property type="entry name" value="Cadherin"/>
    <property type="match status" value="5"/>
</dbReference>
<dbReference type="PRINTS" id="PR00205">
    <property type="entry name" value="CADHERIN"/>
</dbReference>
<dbReference type="SMART" id="SM00112">
    <property type="entry name" value="CA"/>
    <property type="match status" value="6"/>
</dbReference>
<dbReference type="SUPFAM" id="SSF49313">
    <property type="entry name" value="Cadherin-like"/>
    <property type="match status" value="6"/>
</dbReference>
<dbReference type="PROSITE" id="PS00232">
    <property type="entry name" value="CADHERIN_1"/>
    <property type="match status" value="5"/>
</dbReference>
<dbReference type="PROSITE" id="PS50268">
    <property type="entry name" value="CADHERIN_2"/>
    <property type="match status" value="6"/>
</dbReference>
<feature type="signal peptide" evidence="2">
    <location>
        <begin position="1"/>
        <end position="60"/>
    </location>
</feature>
<feature type="chain" id="PRO_0000004005" description="Protocadherin-20">
    <location>
        <begin position="61"/>
        <end position="951"/>
    </location>
</feature>
<feature type="topological domain" description="Extracellular" evidence="2">
    <location>
        <begin position="61"/>
        <end position="890"/>
    </location>
</feature>
<feature type="transmembrane region" description="Helical" evidence="2">
    <location>
        <begin position="891"/>
        <end position="911"/>
    </location>
</feature>
<feature type="topological domain" description="Cytoplasmic" evidence="2">
    <location>
        <begin position="912"/>
        <end position="951"/>
    </location>
</feature>
<feature type="domain" description="Cadherin 1" evidence="3">
    <location>
        <begin position="64"/>
        <end position="209"/>
    </location>
</feature>
<feature type="domain" description="Cadherin 2" evidence="3">
    <location>
        <begin position="210"/>
        <end position="320"/>
    </location>
</feature>
<feature type="domain" description="Cadherin 3" evidence="3">
    <location>
        <begin position="321"/>
        <end position="535"/>
    </location>
</feature>
<feature type="domain" description="Cadherin 4" evidence="3">
    <location>
        <begin position="536"/>
        <end position="639"/>
    </location>
</feature>
<feature type="domain" description="Cadherin 5" evidence="3">
    <location>
        <begin position="640"/>
        <end position="742"/>
    </location>
</feature>
<feature type="domain" description="Cadherin 6" evidence="3">
    <location>
        <begin position="746"/>
        <end position="863"/>
    </location>
</feature>
<feature type="glycosylation site" description="N-linked (GlcNAc...) asparagine" evidence="2">
    <location>
        <position position="135"/>
    </location>
</feature>
<feature type="glycosylation site" description="N-linked (GlcNAc...) asparagine" evidence="2">
    <location>
        <position position="326"/>
    </location>
</feature>
<feature type="glycosylation site" description="N-linked (GlcNAc...) asparagine" evidence="2">
    <location>
        <position position="332"/>
    </location>
</feature>
<feature type="glycosylation site" description="N-linked (GlcNAc...) asparagine" evidence="2">
    <location>
        <position position="680"/>
    </location>
</feature>
<feature type="glycosylation site" description="N-linked (GlcNAc...) asparagine" evidence="2">
    <location>
        <position position="748"/>
    </location>
</feature>
<feature type="glycosylation site" description="N-linked (GlcNAc...) asparagine" evidence="2">
    <location>
        <position position="803"/>
    </location>
</feature>
<feature type="glycosylation site" description="N-linked (GlcNAc...) asparagine" evidence="2">
    <location>
        <position position="844"/>
    </location>
</feature>
<feature type="glycosylation site" description="N-linked (GlcNAc...) asparagine" evidence="2">
    <location>
        <position position="849"/>
    </location>
</feature>
<feature type="sequence variant" id="VAR_036111" description="In a breast cancer sample; somatic mutation." evidence="4">
    <original>V</original>
    <variation>M</variation>
    <location>
        <position position="523"/>
    </location>
</feature>
<feature type="sequence conflict" description="In Ref. 1; AAF89690." evidence="5" ref="1">
    <original>I</original>
    <variation>T</variation>
    <location>
        <position position="291"/>
    </location>
</feature>
<evidence type="ECO:0000250" key="1"/>
<evidence type="ECO:0000255" key="2"/>
<evidence type="ECO:0000255" key="3">
    <source>
        <dbReference type="PROSITE-ProRule" id="PRU00043"/>
    </source>
</evidence>
<evidence type="ECO:0000269" key="4">
    <source>
    </source>
</evidence>
<evidence type="ECO:0000305" key="5"/>
<reference key="1">
    <citation type="submission" date="1999-07" db="EMBL/GenBank/DDBJ databases">
        <title>Identification and characterization of a novel human protocadherin localized on chromosome 13q21, a region containing also protocadherin-8 and -9.</title>
        <authorList>
            <person name="Kools P.F.J."/>
            <person name="van Roy F."/>
        </authorList>
    </citation>
    <scope>NUCLEOTIDE SEQUENCE [MRNA]</scope>
</reference>
<reference key="2">
    <citation type="journal article" date="2007" name="BMC Genomics">
        <title>The full-ORF clone resource of the German cDNA consortium.</title>
        <authorList>
            <person name="Bechtel S."/>
            <person name="Rosenfelder H."/>
            <person name="Duda A."/>
            <person name="Schmidt C.P."/>
            <person name="Ernst U."/>
            <person name="Wellenreuther R."/>
            <person name="Mehrle A."/>
            <person name="Schuster C."/>
            <person name="Bahr A."/>
            <person name="Bloecker H."/>
            <person name="Heubner D."/>
            <person name="Hoerlein A."/>
            <person name="Michel G."/>
            <person name="Wedler H."/>
            <person name="Koehrer K."/>
            <person name="Ottenwaelder B."/>
            <person name="Poustka A."/>
            <person name="Wiemann S."/>
            <person name="Schupp I."/>
        </authorList>
    </citation>
    <scope>NUCLEOTIDE SEQUENCE [LARGE SCALE MRNA]</scope>
    <source>
        <tissue>Testis</tissue>
    </source>
</reference>
<reference key="3">
    <citation type="journal article" date="2004" name="Nat. Genet.">
        <title>Complete sequencing and characterization of 21,243 full-length human cDNAs.</title>
        <authorList>
            <person name="Ota T."/>
            <person name="Suzuki Y."/>
            <person name="Nishikawa T."/>
            <person name="Otsuki T."/>
            <person name="Sugiyama T."/>
            <person name="Irie R."/>
            <person name="Wakamatsu A."/>
            <person name="Hayashi K."/>
            <person name="Sato H."/>
            <person name="Nagai K."/>
            <person name="Kimura K."/>
            <person name="Makita H."/>
            <person name="Sekine M."/>
            <person name="Obayashi M."/>
            <person name="Nishi T."/>
            <person name="Shibahara T."/>
            <person name="Tanaka T."/>
            <person name="Ishii S."/>
            <person name="Yamamoto J."/>
            <person name="Saito K."/>
            <person name="Kawai Y."/>
            <person name="Isono Y."/>
            <person name="Nakamura Y."/>
            <person name="Nagahari K."/>
            <person name="Murakami K."/>
            <person name="Yasuda T."/>
            <person name="Iwayanagi T."/>
            <person name="Wagatsuma M."/>
            <person name="Shiratori A."/>
            <person name="Sudo H."/>
            <person name="Hosoiri T."/>
            <person name="Kaku Y."/>
            <person name="Kodaira H."/>
            <person name="Kondo H."/>
            <person name="Sugawara M."/>
            <person name="Takahashi M."/>
            <person name="Kanda K."/>
            <person name="Yokoi T."/>
            <person name="Furuya T."/>
            <person name="Kikkawa E."/>
            <person name="Omura Y."/>
            <person name="Abe K."/>
            <person name="Kamihara K."/>
            <person name="Katsuta N."/>
            <person name="Sato K."/>
            <person name="Tanikawa M."/>
            <person name="Yamazaki M."/>
            <person name="Ninomiya K."/>
            <person name="Ishibashi T."/>
            <person name="Yamashita H."/>
            <person name="Murakawa K."/>
            <person name="Fujimori K."/>
            <person name="Tanai H."/>
            <person name="Kimata M."/>
            <person name="Watanabe M."/>
            <person name="Hiraoka S."/>
            <person name="Chiba Y."/>
            <person name="Ishida S."/>
            <person name="Ono Y."/>
            <person name="Takiguchi S."/>
            <person name="Watanabe S."/>
            <person name="Yosida M."/>
            <person name="Hotuta T."/>
            <person name="Kusano J."/>
            <person name="Kanehori K."/>
            <person name="Takahashi-Fujii A."/>
            <person name="Hara H."/>
            <person name="Tanase T.-O."/>
            <person name="Nomura Y."/>
            <person name="Togiya S."/>
            <person name="Komai F."/>
            <person name="Hara R."/>
            <person name="Takeuchi K."/>
            <person name="Arita M."/>
            <person name="Imose N."/>
            <person name="Musashino K."/>
            <person name="Yuuki H."/>
            <person name="Oshima A."/>
            <person name="Sasaki N."/>
            <person name="Aotsuka S."/>
            <person name="Yoshikawa Y."/>
            <person name="Matsunawa H."/>
            <person name="Ichihara T."/>
            <person name="Shiohata N."/>
            <person name="Sano S."/>
            <person name="Moriya S."/>
            <person name="Momiyama H."/>
            <person name="Satoh N."/>
            <person name="Takami S."/>
            <person name="Terashima Y."/>
            <person name="Suzuki O."/>
            <person name="Nakagawa S."/>
            <person name="Senoh A."/>
            <person name="Mizoguchi H."/>
            <person name="Goto Y."/>
            <person name="Shimizu F."/>
            <person name="Wakebe H."/>
            <person name="Hishigaki H."/>
            <person name="Watanabe T."/>
            <person name="Sugiyama A."/>
            <person name="Takemoto M."/>
            <person name="Kawakami B."/>
            <person name="Yamazaki M."/>
            <person name="Watanabe K."/>
            <person name="Kumagai A."/>
            <person name="Itakura S."/>
            <person name="Fukuzumi Y."/>
            <person name="Fujimori Y."/>
            <person name="Komiyama M."/>
            <person name="Tashiro H."/>
            <person name="Tanigami A."/>
            <person name="Fujiwara T."/>
            <person name="Ono T."/>
            <person name="Yamada K."/>
            <person name="Fujii Y."/>
            <person name="Ozaki K."/>
            <person name="Hirao M."/>
            <person name="Ohmori Y."/>
            <person name="Kawabata A."/>
            <person name="Hikiji T."/>
            <person name="Kobatake N."/>
            <person name="Inagaki H."/>
            <person name="Ikema Y."/>
            <person name="Okamoto S."/>
            <person name="Okitani R."/>
            <person name="Kawakami T."/>
            <person name="Noguchi S."/>
            <person name="Itoh T."/>
            <person name="Shigeta K."/>
            <person name="Senba T."/>
            <person name="Matsumura K."/>
            <person name="Nakajima Y."/>
            <person name="Mizuno T."/>
            <person name="Morinaga M."/>
            <person name="Sasaki M."/>
            <person name="Togashi T."/>
            <person name="Oyama M."/>
            <person name="Hata H."/>
            <person name="Watanabe M."/>
            <person name="Komatsu T."/>
            <person name="Mizushima-Sugano J."/>
            <person name="Satoh T."/>
            <person name="Shirai Y."/>
            <person name="Takahashi Y."/>
            <person name="Nakagawa K."/>
            <person name="Okumura K."/>
            <person name="Nagase T."/>
            <person name="Nomura N."/>
            <person name="Kikuchi H."/>
            <person name="Masuho Y."/>
            <person name="Yamashita R."/>
            <person name="Nakai K."/>
            <person name="Yada T."/>
            <person name="Nakamura Y."/>
            <person name="Ohara O."/>
            <person name="Isogai T."/>
            <person name="Sugano S."/>
        </authorList>
    </citation>
    <scope>NUCLEOTIDE SEQUENCE [LARGE SCALE MRNA]</scope>
    <source>
        <tissue>Hippocampus</tissue>
    </source>
</reference>
<reference key="4">
    <citation type="journal article" date="2004" name="Nature">
        <title>The DNA sequence and analysis of human chromosome 13.</title>
        <authorList>
            <person name="Dunham A."/>
            <person name="Matthews L.H."/>
            <person name="Burton J."/>
            <person name="Ashurst J.L."/>
            <person name="Howe K.L."/>
            <person name="Ashcroft K.J."/>
            <person name="Beare D.M."/>
            <person name="Burford D.C."/>
            <person name="Hunt S.E."/>
            <person name="Griffiths-Jones S."/>
            <person name="Jones M.C."/>
            <person name="Keenan S.J."/>
            <person name="Oliver K."/>
            <person name="Scott C.E."/>
            <person name="Ainscough R."/>
            <person name="Almeida J.P."/>
            <person name="Ambrose K.D."/>
            <person name="Andrews D.T."/>
            <person name="Ashwell R.I.S."/>
            <person name="Babbage A.K."/>
            <person name="Bagguley C.L."/>
            <person name="Bailey J."/>
            <person name="Bannerjee R."/>
            <person name="Barlow K.F."/>
            <person name="Bates K."/>
            <person name="Beasley H."/>
            <person name="Bird C.P."/>
            <person name="Bray-Allen S."/>
            <person name="Brown A.J."/>
            <person name="Brown J.Y."/>
            <person name="Burrill W."/>
            <person name="Carder C."/>
            <person name="Carter N.P."/>
            <person name="Chapman J.C."/>
            <person name="Clamp M.E."/>
            <person name="Clark S.Y."/>
            <person name="Clarke G."/>
            <person name="Clee C.M."/>
            <person name="Clegg S.C."/>
            <person name="Cobley V."/>
            <person name="Collins J.E."/>
            <person name="Corby N."/>
            <person name="Coville G.J."/>
            <person name="Deloukas P."/>
            <person name="Dhami P."/>
            <person name="Dunham I."/>
            <person name="Dunn M."/>
            <person name="Earthrowl M.E."/>
            <person name="Ellington A.G."/>
            <person name="Faulkner L."/>
            <person name="Frankish A.G."/>
            <person name="Frankland J."/>
            <person name="French L."/>
            <person name="Garner P."/>
            <person name="Garnett J."/>
            <person name="Gilbert J.G.R."/>
            <person name="Gilson C.J."/>
            <person name="Ghori J."/>
            <person name="Grafham D.V."/>
            <person name="Gribble S.M."/>
            <person name="Griffiths C."/>
            <person name="Hall R.E."/>
            <person name="Hammond S."/>
            <person name="Harley J.L."/>
            <person name="Hart E.A."/>
            <person name="Heath P.D."/>
            <person name="Howden P.J."/>
            <person name="Huckle E.J."/>
            <person name="Hunt P.J."/>
            <person name="Hunt A.R."/>
            <person name="Johnson C."/>
            <person name="Johnson D."/>
            <person name="Kay M."/>
            <person name="Kimberley A.M."/>
            <person name="King A."/>
            <person name="Laird G.K."/>
            <person name="Langford C.J."/>
            <person name="Lawlor S."/>
            <person name="Leongamornlert D.A."/>
            <person name="Lloyd D.M."/>
            <person name="Lloyd C."/>
            <person name="Loveland J.E."/>
            <person name="Lovell J."/>
            <person name="Martin S."/>
            <person name="Mashreghi-Mohammadi M."/>
            <person name="McLaren S.J."/>
            <person name="McMurray A."/>
            <person name="Milne S."/>
            <person name="Moore M.J.F."/>
            <person name="Nickerson T."/>
            <person name="Palmer S.A."/>
            <person name="Pearce A.V."/>
            <person name="Peck A.I."/>
            <person name="Pelan S."/>
            <person name="Phillimore B."/>
            <person name="Porter K.M."/>
            <person name="Rice C.M."/>
            <person name="Searle S."/>
            <person name="Sehra H.K."/>
            <person name="Shownkeen R."/>
            <person name="Skuce C.D."/>
            <person name="Smith M."/>
            <person name="Steward C.A."/>
            <person name="Sycamore N."/>
            <person name="Tester J."/>
            <person name="Thomas D.W."/>
            <person name="Tracey A."/>
            <person name="Tromans A."/>
            <person name="Tubby B."/>
            <person name="Wall M."/>
            <person name="Wallis J.M."/>
            <person name="West A.P."/>
            <person name="Whitehead S.L."/>
            <person name="Willey D.L."/>
            <person name="Wilming L."/>
            <person name="Wray P.W."/>
            <person name="Wright M.W."/>
            <person name="Young L."/>
            <person name="Coulson A."/>
            <person name="Durbin R.M."/>
            <person name="Hubbard T."/>
            <person name="Sulston J.E."/>
            <person name="Beck S."/>
            <person name="Bentley D.R."/>
            <person name="Rogers J."/>
            <person name="Ross M.T."/>
        </authorList>
    </citation>
    <scope>NUCLEOTIDE SEQUENCE [LARGE SCALE GENOMIC DNA]</scope>
</reference>
<reference key="5">
    <citation type="submission" date="2005-07" db="EMBL/GenBank/DDBJ databases">
        <authorList>
            <person name="Mural R.J."/>
            <person name="Istrail S."/>
            <person name="Sutton G.G."/>
            <person name="Florea L."/>
            <person name="Halpern A.L."/>
            <person name="Mobarry C.M."/>
            <person name="Lippert R."/>
            <person name="Walenz B."/>
            <person name="Shatkay H."/>
            <person name="Dew I."/>
            <person name="Miller J.R."/>
            <person name="Flanigan M.J."/>
            <person name="Edwards N.J."/>
            <person name="Bolanos R."/>
            <person name="Fasulo D."/>
            <person name="Halldorsson B.V."/>
            <person name="Hannenhalli S."/>
            <person name="Turner R."/>
            <person name="Yooseph S."/>
            <person name="Lu F."/>
            <person name="Nusskern D.R."/>
            <person name="Shue B.C."/>
            <person name="Zheng X.H."/>
            <person name="Zhong F."/>
            <person name="Delcher A.L."/>
            <person name="Huson D.H."/>
            <person name="Kravitz S.A."/>
            <person name="Mouchard L."/>
            <person name="Reinert K."/>
            <person name="Remington K.A."/>
            <person name="Clark A.G."/>
            <person name="Waterman M.S."/>
            <person name="Eichler E.E."/>
            <person name="Adams M.D."/>
            <person name="Hunkapiller M.W."/>
            <person name="Myers E.W."/>
            <person name="Venter J.C."/>
        </authorList>
    </citation>
    <scope>NUCLEOTIDE SEQUENCE [LARGE SCALE GENOMIC DNA]</scope>
</reference>
<reference key="6">
    <citation type="journal article" date="2004" name="Genome Res.">
        <title>The status, quality, and expansion of the NIH full-length cDNA project: the Mammalian Gene Collection (MGC).</title>
        <authorList>
            <consortium name="The MGC Project Team"/>
        </authorList>
    </citation>
    <scope>NUCLEOTIDE SEQUENCE [LARGE SCALE MRNA] OF 5-951</scope>
    <source>
        <tissue>Lung</tissue>
    </source>
</reference>
<reference key="7">
    <citation type="journal article" date="2006" name="Science">
        <title>The consensus coding sequences of human breast and colorectal cancers.</title>
        <authorList>
            <person name="Sjoeblom T."/>
            <person name="Jones S."/>
            <person name="Wood L.D."/>
            <person name="Parsons D.W."/>
            <person name="Lin J."/>
            <person name="Barber T.D."/>
            <person name="Mandelker D."/>
            <person name="Leary R.J."/>
            <person name="Ptak J."/>
            <person name="Silliman N."/>
            <person name="Szabo S."/>
            <person name="Buckhaults P."/>
            <person name="Farrell C."/>
            <person name="Meeh P."/>
            <person name="Markowitz S.D."/>
            <person name="Willis J."/>
            <person name="Dawson D."/>
            <person name="Willson J.K.V."/>
            <person name="Gazdar A.F."/>
            <person name="Hartigan J."/>
            <person name="Wu L."/>
            <person name="Liu C."/>
            <person name="Parmigiani G."/>
            <person name="Park B.H."/>
            <person name="Bachman K.E."/>
            <person name="Papadopoulos N."/>
            <person name="Vogelstein B."/>
            <person name="Kinzler K.W."/>
            <person name="Velculescu V.E."/>
        </authorList>
    </citation>
    <scope>VARIANT [LARGE SCALE ANALYSIS] MET-523</scope>
</reference>
<sequence>MRGRGNARSSQALGVSWCPATWHPRLDMGRLHRPRSSTSYRNLPHLFLFFLFVGPFSCLGSYSRATELLYSLNEGLPAGVLIGSLAEDLRLLPRSAGRPDPQSQLPERTGAEWNPPLSFSLASRGLSGQYVTLDNRSGELHTSAQEIDREALCVEGGGGTAWSGSVSISSSPSDSCLLLLDVLVLPQEYFRFVKVKIAIRDINDNAPQFPVSQISVWVPENAPVNTRLAIEHPAVDPDVGINGVQTYRLLDYHGMFTLDVEENENGERTPYLIVMGALDRETQDQYVSIIIAEDGGSPPLLGSATLTIGISDINDNCPLFTDSQINVTVYGNATVGTPIAAVQAVDKDLGTNAQITYSYSQKVPQASKDLFHLDENTGVIKLFSKIGGSVLESHKLTILANGPGCIPAVITALVSIIKVIFRPPEIVPRYIANEIDGVVYLKELEPVNTPIAFFTIRDPEGKYKVNCYLDGEGPFRLSPYKPYNNEYLLETTKPMDYELQQFYEVAVVAWNSEGFHVKRVIKVQLLDDNDNAPIFLQPLIELTIEENNSPNAFLTKLYATDADSEERGQVSYFLGPDAPSYFSLDSVTGILTVSTQLDREEKEKYRYTVRAVDCGKPPRESVATVALTVLDKNDNSPRFINKDFSFFVPENFPGYGEIGVISVTDADAGRNGWVALSVVNQSDIFVIDTGKGMLRAKVSLDREQQSSYTLWVEAVDGGEPALSSTAKITILLLDINDNPPLVLFPQSNMSYLLVLPSTLPGSPVTEVYAVDKDTGMNAVIAYSIIGRRGPRPESFRIDPKTGNITLEEALLQTDYGLHRLLVKVSDHGYPEPLHSTVMVNLFVNDTVSNESYIESLLRKEPEINIEEKEPQISIEPTHRKVESVSCMPTLVALSVISLGSITLVTGMGIYICLRKGEKHPREDENLEVQIPLKGKIDLHMRERKPMDISNI</sequence>
<protein>
    <recommendedName>
        <fullName>Protocadherin-20</fullName>
    </recommendedName>
    <alternativeName>
        <fullName>Protocadherin-13</fullName>
    </alternativeName>
</protein>
<accession>Q8N6Y1</accession>
<accession>A8K1K9</accession>
<accession>B1AQU2</accession>
<accession>Q8NDN4</accession>
<accession>Q9NRT9</accession>
<keyword id="KW-0106">Calcium</keyword>
<keyword id="KW-0130">Cell adhesion</keyword>
<keyword id="KW-1003">Cell membrane</keyword>
<keyword id="KW-0325">Glycoprotein</keyword>
<keyword id="KW-0472">Membrane</keyword>
<keyword id="KW-1267">Proteomics identification</keyword>
<keyword id="KW-1185">Reference proteome</keyword>
<keyword id="KW-0677">Repeat</keyword>
<keyword id="KW-0732">Signal</keyword>
<keyword id="KW-0812">Transmembrane</keyword>
<keyword id="KW-1133">Transmembrane helix</keyword>
<organism>
    <name type="scientific">Homo sapiens</name>
    <name type="common">Human</name>
    <dbReference type="NCBI Taxonomy" id="9606"/>
    <lineage>
        <taxon>Eukaryota</taxon>
        <taxon>Metazoa</taxon>
        <taxon>Chordata</taxon>
        <taxon>Craniata</taxon>
        <taxon>Vertebrata</taxon>
        <taxon>Euteleostomi</taxon>
        <taxon>Mammalia</taxon>
        <taxon>Eutheria</taxon>
        <taxon>Euarchontoglires</taxon>
        <taxon>Primates</taxon>
        <taxon>Haplorrhini</taxon>
        <taxon>Catarrhini</taxon>
        <taxon>Hominidae</taxon>
        <taxon>Homo</taxon>
    </lineage>
</organism>